<evidence type="ECO:0000255" key="1">
    <source>
        <dbReference type="HAMAP-Rule" id="MF_01315"/>
    </source>
</evidence>
<evidence type="ECO:0000256" key="2">
    <source>
        <dbReference type="SAM" id="MobiDB-lite"/>
    </source>
</evidence>
<evidence type="ECO:0000305" key="3"/>
<protein>
    <recommendedName>
        <fullName evidence="1">Small ribosomal subunit protein uS13</fullName>
    </recommendedName>
    <alternativeName>
        <fullName evidence="3">30S ribosomal protein S13</fullName>
    </alternativeName>
</protein>
<organism>
    <name type="scientific">Clostridium acetobutylicum (strain ATCC 824 / DSM 792 / JCM 1419 / IAM 19013 / LMG 5710 / NBRC 13948 / NRRL B-527 / VKM B-1787 / 2291 / W)</name>
    <dbReference type="NCBI Taxonomy" id="272562"/>
    <lineage>
        <taxon>Bacteria</taxon>
        <taxon>Bacillati</taxon>
        <taxon>Bacillota</taxon>
        <taxon>Clostridia</taxon>
        <taxon>Eubacteriales</taxon>
        <taxon>Clostridiaceae</taxon>
        <taxon>Clostridium</taxon>
    </lineage>
</organism>
<feature type="chain" id="PRO_0000132082" description="Small ribosomal subunit protein uS13">
    <location>
        <begin position="1"/>
        <end position="123"/>
    </location>
</feature>
<feature type="region of interest" description="Disordered" evidence="2">
    <location>
        <begin position="95"/>
        <end position="123"/>
    </location>
</feature>
<keyword id="KW-1185">Reference proteome</keyword>
<keyword id="KW-0687">Ribonucleoprotein</keyword>
<keyword id="KW-0689">Ribosomal protein</keyword>
<keyword id="KW-0694">RNA-binding</keyword>
<keyword id="KW-0699">rRNA-binding</keyword>
<keyword id="KW-0820">tRNA-binding</keyword>
<name>RS13_CLOAB</name>
<comment type="function">
    <text evidence="1">Located at the top of the head of the 30S subunit, it contacts several helices of the 16S rRNA. In the 70S ribosome it contacts the 23S rRNA (bridge B1a) and protein L5 of the 50S subunit (bridge B1b), connecting the 2 subunits; these bridges are implicated in subunit movement. Contacts the tRNAs in the A and P-sites.</text>
</comment>
<comment type="subunit">
    <text evidence="1">Part of the 30S ribosomal subunit. Forms a loose heterodimer with protein S19. Forms two bridges to the 50S subunit in the 70S ribosome.</text>
</comment>
<comment type="similarity">
    <text evidence="1">Belongs to the universal ribosomal protein uS13 family.</text>
</comment>
<dbReference type="EMBL" id="AE001437">
    <property type="protein sequence ID" value="AAK81047.1"/>
    <property type="molecule type" value="Genomic_DNA"/>
</dbReference>
<dbReference type="PIR" id="D97282">
    <property type="entry name" value="D97282"/>
</dbReference>
<dbReference type="RefSeq" id="NP_349707.1">
    <property type="nucleotide sequence ID" value="NC_003030.1"/>
</dbReference>
<dbReference type="RefSeq" id="WP_010966388.1">
    <property type="nucleotide sequence ID" value="NC_003030.1"/>
</dbReference>
<dbReference type="SMR" id="Q97EK3"/>
<dbReference type="STRING" id="272562.CA_C3107"/>
<dbReference type="GeneID" id="44999594"/>
<dbReference type="KEGG" id="cac:CA_C3107"/>
<dbReference type="PATRIC" id="fig|272562.8.peg.3290"/>
<dbReference type="eggNOG" id="COG0099">
    <property type="taxonomic scope" value="Bacteria"/>
</dbReference>
<dbReference type="HOGENOM" id="CLU_103849_1_2_9"/>
<dbReference type="OrthoDB" id="9803610at2"/>
<dbReference type="Proteomes" id="UP000000814">
    <property type="component" value="Chromosome"/>
</dbReference>
<dbReference type="GO" id="GO:0005829">
    <property type="term" value="C:cytosol"/>
    <property type="evidence" value="ECO:0007669"/>
    <property type="project" value="TreeGrafter"/>
</dbReference>
<dbReference type="GO" id="GO:0015935">
    <property type="term" value="C:small ribosomal subunit"/>
    <property type="evidence" value="ECO:0007669"/>
    <property type="project" value="TreeGrafter"/>
</dbReference>
<dbReference type="GO" id="GO:0019843">
    <property type="term" value="F:rRNA binding"/>
    <property type="evidence" value="ECO:0007669"/>
    <property type="project" value="UniProtKB-UniRule"/>
</dbReference>
<dbReference type="GO" id="GO:0003735">
    <property type="term" value="F:structural constituent of ribosome"/>
    <property type="evidence" value="ECO:0007669"/>
    <property type="project" value="InterPro"/>
</dbReference>
<dbReference type="GO" id="GO:0000049">
    <property type="term" value="F:tRNA binding"/>
    <property type="evidence" value="ECO:0007669"/>
    <property type="project" value="UniProtKB-UniRule"/>
</dbReference>
<dbReference type="GO" id="GO:0006412">
    <property type="term" value="P:translation"/>
    <property type="evidence" value="ECO:0007669"/>
    <property type="project" value="UniProtKB-UniRule"/>
</dbReference>
<dbReference type="FunFam" id="1.10.8.50:FF:000001">
    <property type="entry name" value="30S ribosomal protein S13"/>
    <property type="match status" value="1"/>
</dbReference>
<dbReference type="FunFam" id="4.10.910.10:FF:000001">
    <property type="entry name" value="30S ribosomal protein S13"/>
    <property type="match status" value="1"/>
</dbReference>
<dbReference type="Gene3D" id="1.10.8.50">
    <property type="match status" value="1"/>
</dbReference>
<dbReference type="Gene3D" id="4.10.910.10">
    <property type="entry name" value="30s ribosomal protein s13, domain 2"/>
    <property type="match status" value="1"/>
</dbReference>
<dbReference type="HAMAP" id="MF_01315">
    <property type="entry name" value="Ribosomal_uS13"/>
    <property type="match status" value="1"/>
</dbReference>
<dbReference type="InterPro" id="IPR027437">
    <property type="entry name" value="Rbsml_uS13_C"/>
</dbReference>
<dbReference type="InterPro" id="IPR001892">
    <property type="entry name" value="Ribosomal_uS13"/>
</dbReference>
<dbReference type="InterPro" id="IPR010979">
    <property type="entry name" value="Ribosomal_uS13-like_H2TH"/>
</dbReference>
<dbReference type="InterPro" id="IPR019980">
    <property type="entry name" value="Ribosomal_uS13_bac-type"/>
</dbReference>
<dbReference type="InterPro" id="IPR018269">
    <property type="entry name" value="Ribosomal_uS13_CS"/>
</dbReference>
<dbReference type="NCBIfam" id="TIGR03631">
    <property type="entry name" value="uS13_bact"/>
    <property type="match status" value="1"/>
</dbReference>
<dbReference type="PANTHER" id="PTHR10871">
    <property type="entry name" value="30S RIBOSOMAL PROTEIN S13/40S RIBOSOMAL PROTEIN S18"/>
    <property type="match status" value="1"/>
</dbReference>
<dbReference type="PANTHER" id="PTHR10871:SF1">
    <property type="entry name" value="SMALL RIBOSOMAL SUBUNIT PROTEIN US13M"/>
    <property type="match status" value="1"/>
</dbReference>
<dbReference type="Pfam" id="PF00416">
    <property type="entry name" value="Ribosomal_S13"/>
    <property type="match status" value="1"/>
</dbReference>
<dbReference type="PIRSF" id="PIRSF002134">
    <property type="entry name" value="Ribosomal_S13"/>
    <property type="match status" value="1"/>
</dbReference>
<dbReference type="SUPFAM" id="SSF46946">
    <property type="entry name" value="S13-like H2TH domain"/>
    <property type="match status" value="1"/>
</dbReference>
<dbReference type="PROSITE" id="PS00646">
    <property type="entry name" value="RIBOSOMAL_S13_1"/>
    <property type="match status" value="1"/>
</dbReference>
<dbReference type="PROSITE" id="PS50159">
    <property type="entry name" value="RIBOSOMAL_S13_2"/>
    <property type="match status" value="1"/>
</dbReference>
<accession>Q97EK3</accession>
<sequence>MARIAGIDLPKEKRVEIGLTYIYGIGLTSSRKIIKATSVNPETRVKDLTEEEVNALRDYINKNFKIEGDLRREVALNIKRLVEIGCYRGIRHRRGLPVRGQKTKTNARTRKGPKKAVASKKKK</sequence>
<reference key="1">
    <citation type="journal article" date="2001" name="J. Bacteriol.">
        <title>Genome sequence and comparative analysis of the solvent-producing bacterium Clostridium acetobutylicum.</title>
        <authorList>
            <person name="Noelling J."/>
            <person name="Breton G."/>
            <person name="Omelchenko M.V."/>
            <person name="Makarova K.S."/>
            <person name="Zeng Q."/>
            <person name="Gibson R."/>
            <person name="Lee H.M."/>
            <person name="Dubois J."/>
            <person name="Qiu D."/>
            <person name="Hitti J."/>
            <person name="Wolf Y.I."/>
            <person name="Tatusov R.L."/>
            <person name="Sabathe F."/>
            <person name="Doucette-Stamm L.A."/>
            <person name="Soucaille P."/>
            <person name="Daly M.J."/>
            <person name="Bennett G.N."/>
            <person name="Koonin E.V."/>
            <person name="Smith D.R."/>
        </authorList>
    </citation>
    <scope>NUCLEOTIDE SEQUENCE [LARGE SCALE GENOMIC DNA]</scope>
    <source>
        <strain>ATCC 824 / DSM 792 / JCM 1419 / IAM 19013 / LMG 5710 / NBRC 13948 / NRRL B-527 / VKM B-1787 / 2291 / W</strain>
    </source>
</reference>
<gene>
    <name evidence="1" type="primary">rpsM</name>
    <name type="ordered locus">CA_C3107</name>
</gene>
<proteinExistence type="inferred from homology"/>